<proteinExistence type="predicted"/>
<reference key="1">
    <citation type="journal article" date="2004" name="Science">
        <title>The 1.2-megabase genome sequence of Mimivirus.</title>
        <authorList>
            <person name="Raoult D."/>
            <person name="Audic S."/>
            <person name="Robert C."/>
            <person name="Abergel C."/>
            <person name="Renesto P."/>
            <person name="Ogata H."/>
            <person name="La Scola B."/>
            <person name="Susan M."/>
            <person name="Claverie J.-M."/>
        </authorList>
    </citation>
    <scope>NUCLEOTIDE SEQUENCE [LARGE SCALE GENOMIC DNA]</scope>
    <source>
        <strain>Rowbotham-Bradford</strain>
    </source>
</reference>
<protein>
    <recommendedName>
        <fullName>Uncharacterized protein L53</fullName>
    </recommendedName>
</protein>
<organism>
    <name type="scientific">Acanthamoeba polyphaga mimivirus</name>
    <name type="common">APMV</name>
    <dbReference type="NCBI Taxonomy" id="212035"/>
    <lineage>
        <taxon>Viruses</taxon>
        <taxon>Varidnaviria</taxon>
        <taxon>Bamfordvirae</taxon>
        <taxon>Nucleocytoviricota</taxon>
        <taxon>Megaviricetes</taxon>
        <taxon>Imitervirales</taxon>
        <taxon>Mimiviridae</taxon>
        <taxon>Megamimivirinae</taxon>
        <taxon>Mimivirus</taxon>
        <taxon>Mimivirus bradfordmassiliense</taxon>
    </lineage>
</organism>
<accession>Q5UPC9</accession>
<keyword id="KW-1185">Reference proteome</keyword>
<feature type="chain" id="PRO_0000071194" description="Uncharacterized protein L53">
    <location>
        <begin position="1"/>
        <end position="100"/>
    </location>
</feature>
<organismHost>
    <name type="scientific">Acanthamoeba polyphaga</name>
    <name type="common">Amoeba</name>
    <dbReference type="NCBI Taxonomy" id="5757"/>
</organismHost>
<name>YL053_MIMIV</name>
<sequence>MSKNCCCKICCASAKKCCDEPVFISCREKCEPVIYKCYEICEPVCTPVCKPCKPICKPCKPICTPCKPVCKPVCKPICTPCKPICKPKCCPTYNVSVNLC</sequence>
<gene>
    <name type="ordered locus">MIMI_L53</name>
</gene>
<dbReference type="EMBL" id="AY653733">
    <property type="protein sequence ID" value="AAV50328.1"/>
    <property type="molecule type" value="Genomic_DNA"/>
</dbReference>
<dbReference type="KEGG" id="vg:9924641"/>
<dbReference type="Proteomes" id="UP000001134">
    <property type="component" value="Genome"/>
</dbReference>